<dbReference type="EMBL" id="FN543093">
    <property type="protein sequence ID" value="CBA32144.1"/>
    <property type="status" value="ALT_INIT"/>
    <property type="molecule type" value="Genomic_DNA"/>
</dbReference>
<dbReference type="SMR" id="C9XVZ5"/>
<dbReference type="KEGG" id="ctu:CTU_27700"/>
<dbReference type="PATRIC" id="fig|693216.3.peg.2618"/>
<dbReference type="HOGENOM" id="CLU_018816_2_0_6"/>
<dbReference type="Proteomes" id="UP000002069">
    <property type="component" value="Chromosome"/>
</dbReference>
<dbReference type="GO" id="GO:1990281">
    <property type="term" value="C:efflux pump complex"/>
    <property type="evidence" value="ECO:0007669"/>
    <property type="project" value="TreeGrafter"/>
</dbReference>
<dbReference type="GO" id="GO:0005886">
    <property type="term" value="C:plasma membrane"/>
    <property type="evidence" value="ECO:0007669"/>
    <property type="project" value="UniProtKB-SubCell"/>
</dbReference>
<dbReference type="GO" id="GO:0015562">
    <property type="term" value="F:efflux transmembrane transporter activity"/>
    <property type="evidence" value="ECO:0007669"/>
    <property type="project" value="TreeGrafter"/>
</dbReference>
<dbReference type="FunFam" id="2.40.420.20:FF:000001">
    <property type="entry name" value="Efflux RND transporter periplasmic adaptor subunit"/>
    <property type="match status" value="1"/>
</dbReference>
<dbReference type="FunFam" id="1.10.287.470:FF:000005">
    <property type="entry name" value="Multidrug resistance protein MdtA"/>
    <property type="match status" value="1"/>
</dbReference>
<dbReference type="FunFam" id="2.40.30.170:FF:000006">
    <property type="entry name" value="Multidrug resistance protein MdtA"/>
    <property type="match status" value="1"/>
</dbReference>
<dbReference type="Gene3D" id="2.40.30.170">
    <property type="match status" value="1"/>
</dbReference>
<dbReference type="Gene3D" id="2.40.420.20">
    <property type="match status" value="1"/>
</dbReference>
<dbReference type="Gene3D" id="2.40.50.100">
    <property type="match status" value="1"/>
</dbReference>
<dbReference type="Gene3D" id="1.10.287.470">
    <property type="entry name" value="Helix hairpin bin"/>
    <property type="match status" value="1"/>
</dbReference>
<dbReference type="HAMAP" id="MF_01422">
    <property type="entry name" value="MdtA"/>
    <property type="match status" value="1"/>
</dbReference>
<dbReference type="InterPro" id="IPR032317">
    <property type="entry name" value="CusB_D23"/>
</dbReference>
<dbReference type="InterPro" id="IPR022824">
    <property type="entry name" value="Multidrug-R_MdtA"/>
</dbReference>
<dbReference type="InterPro" id="IPR006143">
    <property type="entry name" value="RND_pump_MFP"/>
</dbReference>
<dbReference type="NCBIfam" id="NF008589">
    <property type="entry name" value="PRK11556.1"/>
    <property type="match status" value="1"/>
</dbReference>
<dbReference type="NCBIfam" id="TIGR01730">
    <property type="entry name" value="RND_mfp"/>
    <property type="match status" value="1"/>
</dbReference>
<dbReference type="PANTHER" id="PTHR30469">
    <property type="entry name" value="MULTIDRUG RESISTANCE PROTEIN MDTA"/>
    <property type="match status" value="1"/>
</dbReference>
<dbReference type="PANTHER" id="PTHR30469:SF12">
    <property type="entry name" value="MULTIDRUG RESISTANCE PROTEIN MDTA"/>
    <property type="match status" value="1"/>
</dbReference>
<dbReference type="Pfam" id="PF16576">
    <property type="entry name" value="HlyD_D23"/>
    <property type="match status" value="1"/>
</dbReference>
<dbReference type="SUPFAM" id="SSF111369">
    <property type="entry name" value="HlyD-like secretion proteins"/>
    <property type="match status" value="1"/>
</dbReference>
<name>MDTA_CROTZ</name>
<accession>C9XVZ5</accession>
<keyword id="KW-0997">Cell inner membrane</keyword>
<keyword id="KW-1003">Cell membrane</keyword>
<keyword id="KW-0472">Membrane</keyword>
<keyword id="KW-0732">Signal</keyword>
<keyword id="KW-0813">Transport</keyword>
<feature type="signal peptide" evidence="1">
    <location>
        <begin position="1"/>
        <end position="21"/>
    </location>
</feature>
<feature type="chain" id="PRO_0000414042" description="Multidrug resistance protein MdtA">
    <location>
        <begin position="22"/>
        <end position="415"/>
    </location>
</feature>
<feature type="region of interest" description="Disordered" evidence="2">
    <location>
        <begin position="387"/>
        <end position="415"/>
    </location>
</feature>
<feature type="compositionally biased region" description="Basic and acidic residues" evidence="2">
    <location>
        <begin position="394"/>
        <end position="403"/>
    </location>
</feature>
<reference key="1">
    <citation type="journal article" date="2011" name="J. Bacteriol.">
        <title>Complete genome sequence of Cronobacter turicensis LMG 23827, a food-borne pathogen causing deaths in neonates.</title>
        <authorList>
            <person name="Stephan R."/>
            <person name="Lehner A."/>
            <person name="Tischler P."/>
            <person name="Rattei T."/>
        </authorList>
    </citation>
    <scope>NUCLEOTIDE SEQUENCE [LARGE SCALE GENOMIC DNA]</scope>
    <source>
        <strain>DSM 18703 / CCUG 55852 / LMG 23827 / z3032</strain>
    </source>
</reference>
<comment type="subunit">
    <text evidence="1">Part of a tripartite efflux system composed of MdtA, MdtB and MdtC.</text>
</comment>
<comment type="subcellular location">
    <subcellularLocation>
        <location evidence="1">Cell inner membrane</location>
        <topology evidence="1">Peripheral membrane protein</topology>
    </subcellularLocation>
</comment>
<comment type="similarity">
    <text evidence="1">Belongs to the membrane fusion protein (MFP) (TC 8.A.1) family.</text>
</comment>
<comment type="sequence caution" evidence="3">
    <conflict type="erroneous initiation">
        <sequence resource="EMBL-CDS" id="CBA32144"/>
    </conflict>
    <text>Truncated N-terminus.</text>
</comment>
<evidence type="ECO:0000255" key="1">
    <source>
        <dbReference type="HAMAP-Rule" id="MF_01422"/>
    </source>
</evidence>
<evidence type="ECO:0000256" key="2">
    <source>
        <dbReference type="SAM" id="MobiDB-lite"/>
    </source>
</evidence>
<evidence type="ECO:0000305" key="3"/>
<gene>
    <name evidence="1" type="primary">mdtA</name>
    <name type="ordered locus">Ctu_27700</name>
</gene>
<protein>
    <recommendedName>
        <fullName evidence="1">Multidrug resistance protein MdtA</fullName>
    </recommendedName>
    <alternativeName>
        <fullName evidence="1">Multidrug transporter MdtA</fullName>
    </alternativeName>
</protein>
<sequence length="415" mass="43993">MKSTVKKRGWVIAGIVVVALAALLYWRYAATEAPSGKAQHAGGRAAMRMGSAPAPVQAATARSEAVPRYLTGLGTITAANTVTVRSRVDGQLMAIHFKEGQQVKAGDLLAEIDPSQFKVALAQAQGQLAKDRATLANARRDLARYQQLGKTNLVSRQELDAQQALVSESEGTLKADEAAVASAQLQLDWSRITAPIDGRVGLKQVDIGNQISSGDTTGIVVLTQTHPIDLVFTLPESDIAAVMQAQKAGKPLTVEAWDRTNSTKLSTGELLSLDNQIDATTGTIKLKARFANEDDALFPNQFVNARMLIDTQQNAVVIPTAALQMGNEGHFVWVLNDDNKVSKHTVTTGIQNSESVVITAGLSAGDRVVTDGIDRLTEGAKVDVVEAQTAADAAKPERGERAPTDSARAAKGARS</sequence>
<proteinExistence type="inferred from homology"/>
<organism>
    <name type="scientific">Cronobacter turicensis (strain DSM 18703 / CCUG 55852 / LMG 23827 / z3032)</name>
    <dbReference type="NCBI Taxonomy" id="693216"/>
    <lineage>
        <taxon>Bacteria</taxon>
        <taxon>Pseudomonadati</taxon>
        <taxon>Pseudomonadota</taxon>
        <taxon>Gammaproteobacteria</taxon>
        <taxon>Enterobacterales</taxon>
        <taxon>Enterobacteriaceae</taxon>
        <taxon>Cronobacter</taxon>
    </lineage>
</organism>